<accession>Q1QDI7</accession>
<reference key="1">
    <citation type="submission" date="2006-03" db="EMBL/GenBank/DDBJ databases">
        <title>Complete sequence of chromosome of Psychrobacter cryohalolentis K5.</title>
        <authorList>
            <consortium name="US DOE Joint Genome Institute"/>
            <person name="Copeland A."/>
            <person name="Lucas S."/>
            <person name="Lapidus A."/>
            <person name="Barry K."/>
            <person name="Detter J.C."/>
            <person name="Glavina T."/>
            <person name="Hammon N."/>
            <person name="Israni S."/>
            <person name="Dalin E."/>
            <person name="Tice H."/>
            <person name="Pitluck S."/>
            <person name="Brettin T."/>
            <person name="Bruce D."/>
            <person name="Han C."/>
            <person name="Tapia R."/>
            <person name="Sims D.R."/>
            <person name="Gilna P."/>
            <person name="Schmutz J."/>
            <person name="Larimer F."/>
            <person name="Land M."/>
            <person name="Hauser L."/>
            <person name="Kyrpides N."/>
            <person name="Kim E."/>
            <person name="Richardson P."/>
        </authorList>
    </citation>
    <scope>NUCLEOTIDE SEQUENCE [LARGE SCALE GENOMIC DNA]</scope>
    <source>
        <strain>ATCC BAA-1226 / DSM 17306 / VKM B-2378 / K5</strain>
    </source>
</reference>
<dbReference type="EMBL" id="CP000323">
    <property type="protein sequence ID" value="ABE74266.1"/>
    <property type="molecule type" value="Genomic_DNA"/>
</dbReference>
<dbReference type="RefSeq" id="WP_010196670.1">
    <property type="nucleotide sequence ID" value="NC_007969.1"/>
</dbReference>
<dbReference type="SMR" id="Q1QDI7"/>
<dbReference type="STRING" id="335284.Pcryo_0483"/>
<dbReference type="GeneID" id="60255488"/>
<dbReference type="KEGG" id="pcr:Pcryo_0483"/>
<dbReference type="eggNOG" id="COG0051">
    <property type="taxonomic scope" value="Bacteria"/>
</dbReference>
<dbReference type="HOGENOM" id="CLU_122625_1_3_6"/>
<dbReference type="Proteomes" id="UP000002425">
    <property type="component" value="Chromosome"/>
</dbReference>
<dbReference type="GO" id="GO:1990904">
    <property type="term" value="C:ribonucleoprotein complex"/>
    <property type="evidence" value="ECO:0007669"/>
    <property type="project" value="UniProtKB-KW"/>
</dbReference>
<dbReference type="GO" id="GO:0005840">
    <property type="term" value="C:ribosome"/>
    <property type="evidence" value="ECO:0007669"/>
    <property type="project" value="UniProtKB-KW"/>
</dbReference>
<dbReference type="GO" id="GO:0003735">
    <property type="term" value="F:structural constituent of ribosome"/>
    <property type="evidence" value="ECO:0007669"/>
    <property type="project" value="InterPro"/>
</dbReference>
<dbReference type="GO" id="GO:0000049">
    <property type="term" value="F:tRNA binding"/>
    <property type="evidence" value="ECO:0007669"/>
    <property type="project" value="UniProtKB-UniRule"/>
</dbReference>
<dbReference type="GO" id="GO:0006412">
    <property type="term" value="P:translation"/>
    <property type="evidence" value="ECO:0007669"/>
    <property type="project" value="UniProtKB-UniRule"/>
</dbReference>
<dbReference type="FunFam" id="3.30.70.600:FF:000001">
    <property type="entry name" value="30S ribosomal protein S10"/>
    <property type="match status" value="1"/>
</dbReference>
<dbReference type="Gene3D" id="3.30.70.600">
    <property type="entry name" value="Ribosomal protein S10 domain"/>
    <property type="match status" value="1"/>
</dbReference>
<dbReference type="HAMAP" id="MF_00508">
    <property type="entry name" value="Ribosomal_uS10"/>
    <property type="match status" value="1"/>
</dbReference>
<dbReference type="InterPro" id="IPR001848">
    <property type="entry name" value="Ribosomal_uS10"/>
</dbReference>
<dbReference type="InterPro" id="IPR018268">
    <property type="entry name" value="Ribosomal_uS10_CS"/>
</dbReference>
<dbReference type="InterPro" id="IPR027486">
    <property type="entry name" value="Ribosomal_uS10_dom"/>
</dbReference>
<dbReference type="InterPro" id="IPR036838">
    <property type="entry name" value="Ribosomal_uS10_dom_sf"/>
</dbReference>
<dbReference type="NCBIfam" id="NF001861">
    <property type="entry name" value="PRK00596.1"/>
    <property type="match status" value="1"/>
</dbReference>
<dbReference type="NCBIfam" id="TIGR01049">
    <property type="entry name" value="rpsJ_bact"/>
    <property type="match status" value="1"/>
</dbReference>
<dbReference type="PANTHER" id="PTHR11700">
    <property type="entry name" value="30S RIBOSOMAL PROTEIN S10 FAMILY MEMBER"/>
    <property type="match status" value="1"/>
</dbReference>
<dbReference type="Pfam" id="PF00338">
    <property type="entry name" value="Ribosomal_S10"/>
    <property type="match status" value="1"/>
</dbReference>
<dbReference type="PRINTS" id="PR00971">
    <property type="entry name" value="RIBOSOMALS10"/>
</dbReference>
<dbReference type="SMART" id="SM01403">
    <property type="entry name" value="Ribosomal_S10"/>
    <property type="match status" value="1"/>
</dbReference>
<dbReference type="SUPFAM" id="SSF54999">
    <property type="entry name" value="Ribosomal protein S10"/>
    <property type="match status" value="1"/>
</dbReference>
<dbReference type="PROSITE" id="PS00361">
    <property type="entry name" value="RIBOSOMAL_S10"/>
    <property type="match status" value="1"/>
</dbReference>
<comment type="function">
    <text evidence="1">Involved in the binding of tRNA to the ribosomes.</text>
</comment>
<comment type="subunit">
    <text evidence="1">Part of the 30S ribosomal subunit.</text>
</comment>
<comment type="similarity">
    <text evidence="1">Belongs to the universal ribosomal protein uS10 family.</text>
</comment>
<proteinExistence type="inferred from homology"/>
<feature type="chain" id="PRO_0000258561" description="Small ribosomal subunit protein uS10">
    <location>
        <begin position="1"/>
        <end position="103"/>
    </location>
</feature>
<keyword id="KW-0687">Ribonucleoprotein</keyword>
<keyword id="KW-0689">Ribosomal protein</keyword>
<sequence length="103" mass="11616">MANQRIRIRLKSFDHRLIDQSAQEIVDTAKRTGAQVCGPVPLPTRIERFNVLTSPHVNKDARDQYEIRTHKRMVDIVQPTDKTVDALMKLDLAAGVDVQIALG</sequence>
<name>RS10_PSYCK</name>
<organism>
    <name type="scientific">Psychrobacter cryohalolentis (strain ATCC BAA-1226 / DSM 17306 / VKM B-2378 / K5)</name>
    <dbReference type="NCBI Taxonomy" id="335284"/>
    <lineage>
        <taxon>Bacteria</taxon>
        <taxon>Pseudomonadati</taxon>
        <taxon>Pseudomonadota</taxon>
        <taxon>Gammaproteobacteria</taxon>
        <taxon>Moraxellales</taxon>
        <taxon>Moraxellaceae</taxon>
        <taxon>Psychrobacter</taxon>
    </lineage>
</organism>
<gene>
    <name evidence="1" type="primary">rpsJ</name>
    <name type="ordered locus">Pcryo_0483</name>
</gene>
<protein>
    <recommendedName>
        <fullName evidence="1">Small ribosomal subunit protein uS10</fullName>
    </recommendedName>
    <alternativeName>
        <fullName evidence="2">30S ribosomal protein S10</fullName>
    </alternativeName>
</protein>
<evidence type="ECO:0000255" key="1">
    <source>
        <dbReference type="HAMAP-Rule" id="MF_00508"/>
    </source>
</evidence>
<evidence type="ECO:0000305" key="2"/>